<name>LEU3_XANAC</name>
<proteinExistence type="inferred from homology"/>
<organism>
    <name type="scientific">Xanthomonas axonopodis pv. citri (strain 306)</name>
    <dbReference type="NCBI Taxonomy" id="190486"/>
    <lineage>
        <taxon>Bacteria</taxon>
        <taxon>Pseudomonadati</taxon>
        <taxon>Pseudomonadota</taxon>
        <taxon>Gammaproteobacteria</taxon>
        <taxon>Lysobacterales</taxon>
        <taxon>Lysobacteraceae</taxon>
        <taxon>Xanthomonas</taxon>
    </lineage>
</organism>
<gene>
    <name evidence="1" type="primary">leuB</name>
    <name type="ordered locus">XAC3456</name>
</gene>
<accession>Q8PH05</accession>
<keyword id="KW-0028">Amino-acid biosynthesis</keyword>
<keyword id="KW-0100">Branched-chain amino acid biosynthesis</keyword>
<keyword id="KW-0963">Cytoplasm</keyword>
<keyword id="KW-0432">Leucine biosynthesis</keyword>
<keyword id="KW-0460">Magnesium</keyword>
<keyword id="KW-0464">Manganese</keyword>
<keyword id="KW-0479">Metal-binding</keyword>
<keyword id="KW-0520">NAD</keyword>
<keyword id="KW-0560">Oxidoreductase</keyword>
<protein>
    <recommendedName>
        <fullName evidence="1">3-isopropylmalate dehydrogenase</fullName>
        <ecNumber evidence="1">1.1.1.85</ecNumber>
    </recommendedName>
    <alternativeName>
        <fullName evidence="1">3-IPM-DH</fullName>
    </alternativeName>
    <alternativeName>
        <fullName evidence="1">Beta-IPM dehydrogenase</fullName>
        <shortName evidence="1">IMDH</shortName>
    </alternativeName>
</protein>
<evidence type="ECO:0000255" key="1">
    <source>
        <dbReference type="HAMAP-Rule" id="MF_01033"/>
    </source>
</evidence>
<reference key="1">
    <citation type="journal article" date="2002" name="Nature">
        <title>Comparison of the genomes of two Xanthomonas pathogens with differing host specificities.</title>
        <authorList>
            <person name="da Silva A.C.R."/>
            <person name="Ferro J.A."/>
            <person name="Reinach F.C."/>
            <person name="Farah C.S."/>
            <person name="Furlan L.R."/>
            <person name="Quaggio R.B."/>
            <person name="Monteiro-Vitorello C.B."/>
            <person name="Van Sluys M.A."/>
            <person name="Almeida N.F. Jr."/>
            <person name="Alves L.M.C."/>
            <person name="do Amaral A.M."/>
            <person name="Bertolini M.C."/>
            <person name="Camargo L.E.A."/>
            <person name="Camarotte G."/>
            <person name="Cannavan F."/>
            <person name="Cardozo J."/>
            <person name="Chambergo F."/>
            <person name="Ciapina L.P."/>
            <person name="Cicarelli R.M.B."/>
            <person name="Coutinho L.L."/>
            <person name="Cursino-Santos J.R."/>
            <person name="El-Dorry H."/>
            <person name="Faria J.B."/>
            <person name="Ferreira A.J.S."/>
            <person name="Ferreira R.C.C."/>
            <person name="Ferro M.I.T."/>
            <person name="Formighieri E.F."/>
            <person name="Franco M.C."/>
            <person name="Greggio C.C."/>
            <person name="Gruber A."/>
            <person name="Katsuyama A.M."/>
            <person name="Kishi L.T."/>
            <person name="Leite R.P."/>
            <person name="Lemos E.G.M."/>
            <person name="Lemos M.V.F."/>
            <person name="Locali E.C."/>
            <person name="Machado M.A."/>
            <person name="Madeira A.M.B.N."/>
            <person name="Martinez-Rossi N.M."/>
            <person name="Martins E.C."/>
            <person name="Meidanis J."/>
            <person name="Menck C.F.M."/>
            <person name="Miyaki C.Y."/>
            <person name="Moon D.H."/>
            <person name="Moreira L.M."/>
            <person name="Novo M.T.M."/>
            <person name="Okura V.K."/>
            <person name="Oliveira M.C."/>
            <person name="Oliveira V.R."/>
            <person name="Pereira H.A."/>
            <person name="Rossi A."/>
            <person name="Sena J.A.D."/>
            <person name="Silva C."/>
            <person name="de Souza R.F."/>
            <person name="Spinola L.A.F."/>
            <person name="Takita M.A."/>
            <person name="Tamura R.E."/>
            <person name="Teixeira E.C."/>
            <person name="Tezza R.I.D."/>
            <person name="Trindade dos Santos M."/>
            <person name="Truffi D."/>
            <person name="Tsai S.M."/>
            <person name="White F.F."/>
            <person name="Setubal J.C."/>
            <person name="Kitajima J.P."/>
        </authorList>
    </citation>
    <scope>NUCLEOTIDE SEQUENCE [LARGE SCALE GENOMIC DNA]</scope>
    <source>
        <strain>306</strain>
    </source>
</reference>
<dbReference type="EC" id="1.1.1.85" evidence="1"/>
<dbReference type="EMBL" id="AE008923">
    <property type="protein sequence ID" value="AAM38299.1"/>
    <property type="molecule type" value="Genomic_DNA"/>
</dbReference>
<dbReference type="RefSeq" id="WP_011052291.1">
    <property type="nucleotide sequence ID" value="NC_003919.1"/>
</dbReference>
<dbReference type="SMR" id="Q8PH05"/>
<dbReference type="GeneID" id="66912499"/>
<dbReference type="KEGG" id="xac:XAC3456"/>
<dbReference type="eggNOG" id="COG0473">
    <property type="taxonomic scope" value="Bacteria"/>
</dbReference>
<dbReference type="HOGENOM" id="CLU_031953_0_3_6"/>
<dbReference type="UniPathway" id="UPA00048">
    <property type="reaction ID" value="UER00072"/>
</dbReference>
<dbReference type="Proteomes" id="UP000000576">
    <property type="component" value="Chromosome"/>
</dbReference>
<dbReference type="GO" id="GO:0005829">
    <property type="term" value="C:cytosol"/>
    <property type="evidence" value="ECO:0007669"/>
    <property type="project" value="TreeGrafter"/>
</dbReference>
<dbReference type="GO" id="GO:0003862">
    <property type="term" value="F:3-isopropylmalate dehydrogenase activity"/>
    <property type="evidence" value="ECO:0007669"/>
    <property type="project" value="UniProtKB-UniRule"/>
</dbReference>
<dbReference type="GO" id="GO:0000287">
    <property type="term" value="F:magnesium ion binding"/>
    <property type="evidence" value="ECO:0007669"/>
    <property type="project" value="InterPro"/>
</dbReference>
<dbReference type="GO" id="GO:0051287">
    <property type="term" value="F:NAD binding"/>
    <property type="evidence" value="ECO:0007669"/>
    <property type="project" value="InterPro"/>
</dbReference>
<dbReference type="GO" id="GO:0009098">
    <property type="term" value="P:L-leucine biosynthetic process"/>
    <property type="evidence" value="ECO:0007669"/>
    <property type="project" value="UniProtKB-UniRule"/>
</dbReference>
<dbReference type="FunFam" id="3.40.718.10:FF:000004">
    <property type="entry name" value="3-isopropylmalate dehydrogenase"/>
    <property type="match status" value="1"/>
</dbReference>
<dbReference type="Gene3D" id="3.40.718.10">
    <property type="entry name" value="Isopropylmalate Dehydrogenase"/>
    <property type="match status" value="1"/>
</dbReference>
<dbReference type="HAMAP" id="MF_01033">
    <property type="entry name" value="LeuB_type1"/>
    <property type="match status" value="1"/>
</dbReference>
<dbReference type="InterPro" id="IPR019818">
    <property type="entry name" value="IsoCit/isopropylmalate_DH_CS"/>
</dbReference>
<dbReference type="InterPro" id="IPR024084">
    <property type="entry name" value="IsoPropMal-DH-like_dom"/>
</dbReference>
<dbReference type="InterPro" id="IPR004429">
    <property type="entry name" value="Isopropylmalate_DH"/>
</dbReference>
<dbReference type="NCBIfam" id="TIGR00169">
    <property type="entry name" value="leuB"/>
    <property type="match status" value="1"/>
</dbReference>
<dbReference type="PANTHER" id="PTHR42979">
    <property type="entry name" value="3-ISOPROPYLMALATE DEHYDROGENASE"/>
    <property type="match status" value="1"/>
</dbReference>
<dbReference type="PANTHER" id="PTHR42979:SF1">
    <property type="entry name" value="3-ISOPROPYLMALATE DEHYDROGENASE"/>
    <property type="match status" value="1"/>
</dbReference>
<dbReference type="Pfam" id="PF00180">
    <property type="entry name" value="Iso_dh"/>
    <property type="match status" value="1"/>
</dbReference>
<dbReference type="SMART" id="SM01329">
    <property type="entry name" value="Iso_dh"/>
    <property type="match status" value="1"/>
</dbReference>
<dbReference type="SUPFAM" id="SSF53659">
    <property type="entry name" value="Isocitrate/Isopropylmalate dehydrogenase-like"/>
    <property type="match status" value="1"/>
</dbReference>
<dbReference type="PROSITE" id="PS00470">
    <property type="entry name" value="IDH_IMDH"/>
    <property type="match status" value="1"/>
</dbReference>
<feature type="chain" id="PRO_0000083784" description="3-isopropylmalate dehydrogenase">
    <location>
        <begin position="1"/>
        <end position="357"/>
    </location>
</feature>
<feature type="binding site" evidence="1">
    <location>
        <begin position="76"/>
        <end position="89"/>
    </location>
    <ligand>
        <name>NAD(+)</name>
        <dbReference type="ChEBI" id="CHEBI:57540"/>
    </ligand>
</feature>
<feature type="binding site" evidence="1">
    <location>
        <position position="96"/>
    </location>
    <ligand>
        <name>substrate</name>
    </ligand>
</feature>
<feature type="binding site" evidence="1">
    <location>
        <position position="106"/>
    </location>
    <ligand>
        <name>substrate</name>
    </ligand>
</feature>
<feature type="binding site" evidence="1">
    <location>
        <position position="134"/>
    </location>
    <ligand>
        <name>substrate</name>
    </ligand>
</feature>
<feature type="binding site" evidence="1">
    <location>
        <position position="224"/>
    </location>
    <ligand>
        <name>Mg(2+)</name>
        <dbReference type="ChEBI" id="CHEBI:18420"/>
    </ligand>
</feature>
<feature type="binding site" evidence="1">
    <location>
        <position position="224"/>
    </location>
    <ligand>
        <name>substrate</name>
    </ligand>
</feature>
<feature type="binding site" evidence="1">
    <location>
        <position position="248"/>
    </location>
    <ligand>
        <name>Mg(2+)</name>
        <dbReference type="ChEBI" id="CHEBI:18420"/>
    </ligand>
</feature>
<feature type="binding site" evidence="1">
    <location>
        <position position="252"/>
    </location>
    <ligand>
        <name>Mg(2+)</name>
        <dbReference type="ChEBI" id="CHEBI:18420"/>
    </ligand>
</feature>
<feature type="binding site" evidence="1">
    <location>
        <begin position="282"/>
        <end position="294"/>
    </location>
    <ligand>
        <name>NAD(+)</name>
        <dbReference type="ChEBI" id="CHEBI:57540"/>
    </ligand>
</feature>
<feature type="site" description="Important for catalysis" evidence="1">
    <location>
        <position position="141"/>
    </location>
</feature>
<feature type="site" description="Important for catalysis" evidence="1">
    <location>
        <position position="192"/>
    </location>
</feature>
<comment type="function">
    <text evidence="1">Catalyzes the oxidation of 3-carboxy-2-hydroxy-4-methylpentanoate (3-isopropylmalate) to 3-carboxy-4-methyl-2-oxopentanoate. The product decarboxylates to 4-methyl-2 oxopentanoate.</text>
</comment>
<comment type="catalytic activity">
    <reaction evidence="1">
        <text>(2R,3S)-3-isopropylmalate + NAD(+) = 4-methyl-2-oxopentanoate + CO2 + NADH</text>
        <dbReference type="Rhea" id="RHEA:32271"/>
        <dbReference type="ChEBI" id="CHEBI:16526"/>
        <dbReference type="ChEBI" id="CHEBI:17865"/>
        <dbReference type="ChEBI" id="CHEBI:35121"/>
        <dbReference type="ChEBI" id="CHEBI:57540"/>
        <dbReference type="ChEBI" id="CHEBI:57945"/>
        <dbReference type="EC" id="1.1.1.85"/>
    </reaction>
</comment>
<comment type="cofactor">
    <cofactor evidence="1">
        <name>Mg(2+)</name>
        <dbReference type="ChEBI" id="CHEBI:18420"/>
    </cofactor>
    <cofactor evidence="1">
        <name>Mn(2+)</name>
        <dbReference type="ChEBI" id="CHEBI:29035"/>
    </cofactor>
    <text evidence="1">Binds 1 Mg(2+) or Mn(2+) ion per subunit.</text>
</comment>
<comment type="pathway">
    <text evidence="1">Amino-acid biosynthesis; L-leucine biosynthesis; L-leucine from 3-methyl-2-oxobutanoate: step 3/4.</text>
</comment>
<comment type="subunit">
    <text evidence="1">Homodimer.</text>
</comment>
<comment type="subcellular location">
    <subcellularLocation>
        <location evidence="1">Cytoplasm</location>
    </subcellularLocation>
</comment>
<comment type="similarity">
    <text evidence="1">Belongs to the isocitrate and isopropylmalate dehydrogenases family. LeuB type 1 subfamily.</text>
</comment>
<sequence length="357" mass="38199">MSKQILILPGDGIGPEIMAEAVKVLKRIDAQHGLGFQLVYDELGGTAYDKYGSPLADETLERARGADAVLLGAVGGPQWDTIDPALRPERGLLKIRSQLGLFANLRPALLYPQLADASTLKPEVVAGLDLLILRELTGGIYFGQPRGNRTLDNGERQAYDTLPYSESEIRRIAKAGFDMARLRGKKLCSVDKANVLASSQLWRAVVEEVAKDYPDIALSHMYVDNAAMQLVRAPKQFDVIVTDNMFGDILSDQASMLTGSIGMLPSASLDANSKGMYEPCHGSAPDIAGKGIANPLATILSVAMMLRYTFARATAADAIEHAVGKVLDQGLRTADIWSEGTTKVGTVAMGDAVVAAL</sequence>